<reference key="1">
    <citation type="journal article" date="2000" name="Nature">
        <title>Sequence and analysis of chromosome 5 of the plant Arabidopsis thaliana.</title>
        <authorList>
            <person name="Tabata S."/>
            <person name="Kaneko T."/>
            <person name="Nakamura Y."/>
            <person name="Kotani H."/>
            <person name="Kato T."/>
            <person name="Asamizu E."/>
            <person name="Miyajima N."/>
            <person name="Sasamoto S."/>
            <person name="Kimura T."/>
            <person name="Hosouchi T."/>
            <person name="Kawashima K."/>
            <person name="Kohara M."/>
            <person name="Matsumoto M."/>
            <person name="Matsuno A."/>
            <person name="Muraki A."/>
            <person name="Nakayama S."/>
            <person name="Nakazaki N."/>
            <person name="Naruo K."/>
            <person name="Okumura S."/>
            <person name="Shinpo S."/>
            <person name="Takeuchi C."/>
            <person name="Wada T."/>
            <person name="Watanabe A."/>
            <person name="Yamada M."/>
            <person name="Yasuda M."/>
            <person name="Sato S."/>
            <person name="de la Bastide M."/>
            <person name="Huang E."/>
            <person name="Spiegel L."/>
            <person name="Gnoj L."/>
            <person name="O'Shaughnessy A."/>
            <person name="Preston R."/>
            <person name="Habermann K."/>
            <person name="Murray J."/>
            <person name="Johnson D."/>
            <person name="Rohlfing T."/>
            <person name="Nelson J."/>
            <person name="Stoneking T."/>
            <person name="Pepin K."/>
            <person name="Spieth J."/>
            <person name="Sekhon M."/>
            <person name="Armstrong J."/>
            <person name="Becker M."/>
            <person name="Belter E."/>
            <person name="Cordum H."/>
            <person name="Cordes M."/>
            <person name="Courtney L."/>
            <person name="Courtney W."/>
            <person name="Dante M."/>
            <person name="Du H."/>
            <person name="Edwards J."/>
            <person name="Fryman J."/>
            <person name="Haakensen B."/>
            <person name="Lamar E."/>
            <person name="Latreille P."/>
            <person name="Leonard S."/>
            <person name="Meyer R."/>
            <person name="Mulvaney E."/>
            <person name="Ozersky P."/>
            <person name="Riley A."/>
            <person name="Strowmatt C."/>
            <person name="Wagner-McPherson C."/>
            <person name="Wollam A."/>
            <person name="Yoakum M."/>
            <person name="Bell M."/>
            <person name="Dedhia N."/>
            <person name="Parnell L."/>
            <person name="Shah R."/>
            <person name="Rodriguez M."/>
            <person name="Hoon See L."/>
            <person name="Vil D."/>
            <person name="Baker J."/>
            <person name="Kirchoff K."/>
            <person name="Toth K."/>
            <person name="King L."/>
            <person name="Bahret A."/>
            <person name="Miller B."/>
            <person name="Marra M.A."/>
            <person name="Martienssen R."/>
            <person name="McCombie W.R."/>
            <person name="Wilson R.K."/>
            <person name="Murphy G."/>
            <person name="Bancroft I."/>
            <person name="Volckaert G."/>
            <person name="Wambutt R."/>
            <person name="Duesterhoeft A."/>
            <person name="Stiekema W."/>
            <person name="Pohl T."/>
            <person name="Entian K.-D."/>
            <person name="Terryn N."/>
            <person name="Hartley N."/>
            <person name="Bent E."/>
            <person name="Johnson S."/>
            <person name="Langham S.-A."/>
            <person name="McCullagh B."/>
            <person name="Robben J."/>
            <person name="Grymonprez B."/>
            <person name="Zimmermann W."/>
            <person name="Ramsperger U."/>
            <person name="Wedler H."/>
            <person name="Balke K."/>
            <person name="Wedler E."/>
            <person name="Peters S."/>
            <person name="van Staveren M."/>
            <person name="Dirkse W."/>
            <person name="Mooijman P."/>
            <person name="Klein Lankhorst R."/>
            <person name="Weitzenegger T."/>
            <person name="Bothe G."/>
            <person name="Rose M."/>
            <person name="Hauf J."/>
            <person name="Berneiser S."/>
            <person name="Hempel S."/>
            <person name="Feldpausch M."/>
            <person name="Lamberth S."/>
            <person name="Villarroel R."/>
            <person name="Gielen J."/>
            <person name="Ardiles W."/>
            <person name="Bents O."/>
            <person name="Lemcke K."/>
            <person name="Kolesov G."/>
            <person name="Mayer K.F.X."/>
            <person name="Rudd S."/>
            <person name="Schoof H."/>
            <person name="Schueller C."/>
            <person name="Zaccaria P."/>
            <person name="Mewes H.-W."/>
            <person name="Bevan M."/>
            <person name="Fransz P.F."/>
        </authorList>
    </citation>
    <scope>NUCLEOTIDE SEQUENCE [LARGE SCALE GENOMIC DNA]</scope>
    <source>
        <strain>cv. Columbia</strain>
    </source>
</reference>
<reference key="2">
    <citation type="journal article" date="2017" name="Plant J.">
        <title>Araport11: a complete reannotation of the Arabidopsis thaliana reference genome.</title>
        <authorList>
            <person name="Cheng C.Y."/>
            <person name="Krishnakumar V."/>
            <person name="Chan A.P."/>
            <person name="Thibaud-Nissen F."/>
            <person name="Schobel S."/>
            <person name="Town C.D."/>
        </authorList>
    </citation>
    <scope>GENOME REANNOTATION</scope>
    <source>
        <strain>cv. Columbia</strain>
    </source>
</reference>
<reference key="3">
    <citation type="journal article" date="1996" name="Plant J.">
        <title>The CER3 gene of Arabidopsis thaliana is expressed in leaves, stems, roots, flowers and apical meristems.</title>
        <authorList>
            <person name="Hannoufa A."/>
            <person name="Negruk V."/>
            <person name="Eisner G."/>
            <person name="Lemieux B."/>
        </authorList>
    </citation>
    <scope>NUCLEOTIDE SEQUENCE [MRNA] OF 1225-2006</scope>
    <source>
        <strain>cv. Wassilewskija</strain>
    </source>
</reference>
<reference key="4">
    <citation type="journal article" date="2007" name="FEBS Lett.">
        <title>PRT6/At5g02310 encodes an Arabidopsis ubiquitin ligase of the N-end rule pathway with arginine specificity and is not the CER3 locus.</title>
        <authorList>
            <person name="Garzon M."/>
            <person name="Eifler K."/>
            <person name="Faust A."/>
            <person name="Scheel H."/>
            <person name="Hofmann K."/>
            <person name="Koncz C."/>
            <person name="Yephremov A."/>
            <person name="Bachmair A."/>
        </authorList>
    </citation>
    <scope>FUNCTION</scope>
</reference>
<reference key="5">
    <citation type="journal article" date="2009" name="Proc. Natl. Acad. Sci. U.S.A.">
        <title>The N-end rule pathway promotes seed germination and establishment through removal of ABA sensitivity in Arabidopsis.</title>
        <authorList>
            <person name="Holman T.J."/>
            <person name="Jones P.D."/>
            <person name="Russell L."/>
            <person name="Medhurst A."/>
            <person name="Ubeda Tomas S."/>
            <person name="Talloji P."/>
            <person name="Marquez J."/>
            <person name="Schmuths H."/>
            <person name="Tung S.A."/>
            <person name="Taylor I."/>
            <person name="Footitt S."/>
            <person name="Bachmair A."/>
            <person name="Theodoulou F.L."/>
            <person name="Holdsworth M.J."/>
        </authorList>
    </citation>
    <scope>FUNCTION</scope>
    <scope>DISRUPTION PHENOTYPE</scope>
    <source>
        <strain>cv. Columbia</strain>
        <strain>cv. Landsberg erecta</strain>
    </source>
</reference>
<reference key="6">
    <citation type="journal article" date="2009" name="Proc. Natl. Acad. Sci. U.S.A.">
        <title>The N-end rule pathway controls multiple functions during Arabidopsis shoot and leaf development.</title>
        <authorList>
            <person name="Graciet E."/>
            <person name="Walter F."/>
            <person name="O'Maoileidigh D.S."/>
            <person name="Pollmann S."/>
            <person name="Meyerowitz E.M."/>
            <person name="Varshavsky A."/>
            <person name="Wellmer F."/>
        </authorList>
    </citation>
    <scope>FUNCTION</scope>
    <scope>DISRUPTION PHENOTYPE</scope>
</reference>
<reference key="7">
    <citation type="journal article" date="2011" name="Nature">
        <title>Oxygen sensing in plants is mediated by an N-end rule pathway for protein destabilization.</title>
        <authorList>
            <person name="Licausi F."/>
            <person name="Kosmacz M."/>
            <person name="Weits D.A."/>
            <person name="Giuntoli B."/>
            <person name="Giorgi F.M."/>
            <person name="Voesenek L.A."/>
            <person name="Perata P."/>
            <person name="van Dongen J.T."/>
        </authorList>
    </citation>
    <scope>FUNCTION</scope>
</reference>
<reference key="8">
    <citation type="journal article" date="2015" name="Plant Physiol.">
        <title>The greening after extended darkness1 is an N-end rule pathway mutant with high tolerance to submergence and starvation.</title>
        <authorList>
            <person name="Riber W."/>
            <person name="Mueller J.T."/>
            <person name="Visser E.J."/>
            <person name="Sasidharan R."/>
            <person name="Voesenek L.A."/>
            <person name="Mustroph A."/>
        </authorList>
    </citation>
    <scope>DISRUPTION PHENOTYPE</scope>
</reference>
<reference key="9">
    <citation type="journal article" date="2016" name="Sci. Rep.">
        <title>The N-end rule pathway regulates pathogen responses in plants.</title>
        <authorList>
            <person name="de Marchi R."/>
            <person name="Sorel M."/>
            <person name="Mooney B."/>
            <person name="Fudal I."/>
            <person name="Goslin K."/>
            <person name="Kwasniewska K."/>
            <person name="Ryan P.T."/>
            <person name="Pfalz M."/>
            <person name="Kroymann J."/>
            <person name="Pollmann S."/>
            <person name="Feechan A."/>
            <person name="Wellmer F."/>
            <person name="Rivas S."/>
            <person name="Graciet E."/>
        </authorList>
    </citation>
    <scope>FUNCTION</scope>
</reference>
<reference key="10">
    <citation type="journal article" date="2018" name="New Phytol.">
        <title>N-terminomics reveals control of Arabidopsis seed storage proteins and proteases by the Arg/N-end rule pathway.</title>
        <authorList>
            <person name="Zhang H."/>
            <person name="Gannon L."/>
            <person name="Hassall K.L."/>
            <person name="Deery M.J."/>
            <person name="Gibbs D.J."/>
            <person name="Holdsworth M.J."/>
            <person name="van der Hoorn R.A.L."/>
            <person name="Lilley K.S."/>
            <person name="Theodoulou F.L."/>
        </authorList>
    </citation>
    <scope>FUNCTION</scope>
</reference>
<reference key="11">
    <citation type="journal article" date="2019" name="New Phytol.">
        <title>Distinct branches of the N-end rule pathway modulate the plant immune response.</title>
        <authorList>
            <person name="Vicente J."/>
            <person name="Mendiondo G.M."/>
            <person name="Pauwels J."/>
            <person name="Pastor V."/>
            <person name="Izquierdo Y."/>
            <person name="Naumann C."/>
            <person name="Movahedi M."/>
            <person name="Rooney D."/>
            <person name="Gibbs D.J."/>
            <person name="Smart K."/>
            <person name="Bachmair A."/>
            <person name="Gray J.E."/>
            <person name="Dissmeyer N."/>
            <person name="Castresana C."/>
            <person name="Ray R.V."/>
            <person name="Gevaert K."/>
            <person name="Holdsworth M.J."/>
        </authorList>
    </citation>
    <scope>FUNCTION</scope>
</reference>
<proteinExistence type="evidence at protein level"/>
<organism>
    <name type="scientific">Arabidopsis thaliana</name>
    <name type="common">Mouse-ear cress</name>
    <dbReference type="NCBI Taxonomy" id="3702"/>
    <lineage>
        <taxon>Eukaryota</taxon>
        <taxon>Viridiplantae</taxon>
        <taxon>Streptophyta</taxon>
        <taxon>Embryophyta</taxon>
        <taxon>Tracheophyta</taxon>
        <taxon>Spermatophyta</taxon>
        <taxon>Magnoliopsida</taxon>
        <taxon>eudicotyledons</taxon>
        <taxon>Gunneridae</taxon>
        <taxon>Pentapetalae</taxon>
        <taxon>rosids</taxon>
        <taxon>malvids</taxon>
        <taxon>Brassicales</taxon>
        <taxon>Brassicaceae</taxon>
        <taxon>Camelineae</taxon>
        <taxon>Arabidopsis</taxon>
    </lineage>
</organism>
<comment type="function">
    <text evidence="4 5 6 7 9 10 11">Ubiquitin protein ligase which is a component of the N-end rule pathway with arginine specificity, and functions with the arginyltransferases ATE1 and ATE2. Recognizes and binds to proteins bearing specific N-terminal residues that are destabilizing according to the N-end rule, leading to their ubiquitination and subsequent degradation (PubMed:17572409, PubMed:19255443, PubMed:19620738, PubMed:22020282). Does not participate in degradation of proteins with N-terminal Phe or Leu (PubMed:17572409). The N-end rule pathway regulates seed after-ripening, seedling sugar sensitivity, seedling lipid breakdown, and abscisic acid (ABA) sensitivity of germination (PubMed:19255443). The N-end rule pathway regulates various aspects of leaf and shoot development (PubMed:19620738). Involved in the ubiquitination and subsequent degradation of RAP2-12, an activator of hypoxic gene expression. The ubiquitination occurs after the N-arginylation of RAP2-12 by ATE1 or ATE2 under aerobic conditions (PubMed:22020282). The end-rule pathway plays a role in regulating the timing and amplitude of the immune response following infection with the bacterial pathogen Pseudomonas syringae pv tomato (PubMed:27173012, PubMed:30117535). Regulates the biosynthesis of plant-defense metabolites such as glucosinolates, and the biosynthesis and response to the phytohormone jasmonate (JA), which plays a key role in plant immunity (PubMed:27173012). Controls the expression of specific defense-response genes, activates the synthesis pathway for the phytoalexin camalexin, and influences basal resistance to the hemibiotroph pathogen Pseudomonas syringae pv tomato (PubMed:30117535). Coordinates the mobilization of seed storage reserves and regulates the abundance and activities of several proteases following seed germination (PubMed:29168982).</text>
</comment>
<comment type="catalytic activity">
    <reaction>
        <text>S-ubiquitinyl-[E2 ubiquitin-conjugating enzyme]-L-cysteine + [acceptor protein]-L-lysine = [E2 ubiquitin-conjugating enzyme]-L-cysteine + N(6)-ubiquitinyl-[acceptor protein]-L-lysine.</text>
        <dbReference type="EC" id="2.3.2.27"/>
    </reaction>
</comment>
<comment type="pathway">
    <text evidence="15">Protein modification; protein ubiquitination.</text>
</comment>
<comment type="disruption phenotype">
    <text evidence="5 6 8">Reduced seed germination potential and inhibition of seedling establishment by sucrose (PubMed:19255443). Exhibits abnormal shoot and leaf development (PubMed:19620738). Increased tolerance of seedlings to submergence and starvation (PubMed:25667318).</text>
</comment>
<comment type="similarity">
    <text evidence="15">Belongs to the E3 ubiquitin-protein ligase UBR1-like family.</text>
</comment>
<comment type="sequence caution" evidence="15">
    <conflict type="erroneous gene model prediction">
        <sequence resource="EMBL-CDS" id="CAB85535"/>
    </conflict>
    <text>Was originally thought to correspond to two different genes At5g02300 and At5g02310.</text>
</comment>
<comment type="sequence caution" evidence="15">
    <conflict type="erroneous gene model prediction">
        <sequence resource="EMBL-CDS" id="CAB85536"/>
    </conflict>
    <text>Was originally thought to correspond to two different genes At5g02300 and At5g02310.</text>
</comment>
<feature type="chain" id="PRO_0000431720" description="E3 ubiquitin-protein ligase PRT6">
    <location>
        <begin position="1"/>
        <end position="2006"/>
    </location>
</feature>
<feature type="zinc finger region" description="UBR-type" evidence="2">
    <location>
        <begin position="119"/>
        <end position="189"/>
    </location>
</feature>
<feature type="zinc finger region" description="RING-type; degenerate" evidence="1">
    <location>
        <begin position="1395"/>
        <end position="1440"/>
    </location>
</feature>
<feature type="region of interest" description="Disordered" evidence="3">
    <location>
        <begin position="1167"/>
        <end position="1186"/>
    </location>
</feature>
<feature type="region of interest" description="Disordered" evidence="3">
    <location>
        <begin position="1338"/>
        <end position="1380"/>
    </location>
</feature>
<feature type="compositionally biased region" description="Basic and acidic residues" evidence="3">
    <location>
        <begin position="1338"/>
        <end position="1348"/>
    </location>
</feature>
<feature type="compositionally biased region" description="Polar residues" evidence="3">
    <location>
        <begin position="1349"/>
        <end position="1360"/>
    </location>
</feature>
<feature type="compositionally biased region" description="Basic and acidic residues" evidence="3">
    <location>
        <begin position="1364"/>
        <end position="1377"/>
    </location>
</feature>
<feature type="sequence conflict" description="In Ref. 3; CAA65198." evidence="15" ref="3">
    <original>P</original>
    <variation>H</variation>
    <location>
        <position position="1341"/>
    </location>
</feature>
<feature type="sequence conflict" description="In Ref. 3; CAA65198." evidence="15" ref="3">
    <location>
        <position position="1430"/>
    </location>
</feature>
<feature type="sequence conflict" description="In Ref. 3; CAA65198." evidence="15" ref="3">
    <original>L</original>
    <variation>F</variation>
    <location>
        <position position="1838"/>
    </location>
</feature>
<feature type="strand" evidence="19">
    <location>
        <begin position="130"/>
        <end position="134"/>
    </location>
</feature>
<feature type="turn" evidence="19">
    <location>
        <begin position="135"/>
        <end position="137"/>
    </location>
</feature>
<feature type="strand" evidence="19">
    <location>
        <begin position="138"/>
        <end position="140"/>
    </location>
</feature>
<feature type="helix" evidence="19">
    <location>
        <begin position="147"/>
        <end position="151"/>
    </location>
</feature>
<feature type="strand" evidence="19">
    <location>
        <begin position="160"/>
        <end position="164"/>
    </location>
</feature>
<feature type="strand" evidence="19">
    <location>
        <begin position="166"/>
        <end position="169"/>
    </location>
</feature>
<feature type="turn" evidence="19">
    <location>
        <begin position="175"/>
        <end position="177"/>
    </location>
</feature>
<feature type="helix" evidence="19">
    <location>
        <begin position="180"/>
        <end position="182"/>
    </location>
</feature>
<feature type="helix" evidence="20">
    <location>
        <begin position="185"/>
        <end position="187"/>
    </location>
</feature>
<evidence type="ECO:0000255" key="1">
    <source>
        <dbReference type="PROSITE-ProRule" id="PRU00175"/>
    </source>
</evidence>
<evidence type="ECO:0000255" key="2">
    <source>
        <dbReference type="PROSITE-ProRule" id="PRU00508"/>
    </source>
</evidence>
<evidence type="ECO:0000256" key="3">
    <source>
        <dbReference type="SAM" id="MobiDB-lite"/>
    </source>
</evidence>
<evidence type="ECO:0000269" key="4">
    <source>
    </source>
</evidence>
<evidence type="ECO:0000269" key="5">
    <source>
    </source>
</evidence>
<evidence type="ECO:0000269" key="6">
    <source>
    </source>
</evidence>
<evidence type="ECO:0000269" key="7">
    <source>
    </source>
</evidence>
<evidence type="ECO:0000269" key="8">
    <source>
    </source>
</evidence>
<evidence type="ECO:0000269" key="9">
    <source>
    </source>
</evidence>
<evidence type="ECO:0000269" key="10">
    <source>
    </source>
</evidence>
<evidence type="ECO:0000269" key="11">
    <source>
    </source>
</evidence>
<evidence type="ECO:0000303" key="12">
    <source>
    </source>
</evidence>
<evidence type="ECO:0000303" key="13">
    <source>
    </source>
</evidence>
<evidence type="ECO:0000303" key="14">
    <source>
    </source>
</evidence>
<evidence type="ECO:0000305" key="15"/>
<evidence type="ECO:0000312" key="16">
    <source>
        <dbReference type="Araport" id="AT5G02310"/>
    </source>
</evidence>
<evidence type="ECO:0000312" key="17">
    <source>
        <dbReference type="EMBL" id="CAB85535.1"/>
    </source>
</evidence>
<evidence type="ECO:0000312" key="18">
    <source>
        <dbReference type="EMBL" id="CAB85536.1"/>
    </source>
</evidence>
<evidence type="ECO:0007829" key="19">
    <source>
        <dbReference type="PDB" id="7XWF"/>
    </source>
</evidence>
<evidence type="ECO:0007829" key="20">
    <source>
        <dbReference type="PDB" id="7Y6X"/>
    </source>
</evidence>
<keyword id="KW-0002">3D-structure</keyword>
<keyword id="KW-0479">Metal-binding</keyword>
<keyword id="KW-0611">Plant defense</keyword>
<keyword id="KW-1185">Reference proteome</keyword>
<keyword id="KW-0808">Transferase</keyword>
<keyword id="KW-0833">Ubl conjugation pathway</keyword>
<keyword id="KW-0862">Zinc</keyword>
<keyword id="KW-0863">Zinc-finger</keyword>
<dbReference type="EC" id="2.3.2.27"/>
<dbReference type="EMBL" id="AL162874">
    <property type="protein sequence ID" value="CAB85535.1"/>
    <property type="status" value="ALT_SEQ"/>
    <property type="molecule type" value="Genomic_DNA"/>
</dbReference>
<dbReference type="EMBL" id="AL162874">
    <property type="protein sequence ID" value="CAB85536.1"/>
    <property type="status" value="ALT_SEQ"/>
    <property type="molecule type" value="Genomic_DNA"/>
</dbReference>
<dbReference type="EMBL" id="CP002688">
    <property type="protein sequence ID" value="AED90457.1"/>
    <property type="molecule type" value="Genomic_DNA"/>
</dbReference>
<dbReference type="EMBL" id="CP002688">
    <property type="protein sequence ID" value="ANM70335.1"/>
    <property type="molecule type" value="Genomic_DNA"/>
</dbReference>
<dbReference type="EMBL" id="X95962">
    <property type="protein sequence ID" value="CAA65198.1"/>
    <property type="molecule type" value="Genomic_DNA"/>
</dbReference>
<dbReference type="PIR" id="T48251">
    <property type="entry name" value="T48251"/>
</dbReference>
<dbReference type="PIR" id="T48252">
    <property type="entry name" value="T48252"/>
</dbReference>
<dbReference type="RefSeq" id="NP_001318457.1">
    <property type="nucleotide sequence ID" value="NM_001342651.1"/>
</dbReference>
<dbReference type="RefSeq" id="NP_195851.2">
    <property type="nucleotide sequence ID" value="NM_120309.2"/>
</dbReference>
<dbReference type="PDB" id="6LHN">
    <property type="method" value="X-ray"/>
    <property type="resolution" value="2.50 A"/>
    <property type="chains" value="A=119-189"/>
</dbReference>
<dbReference type="PDB" id="7XWD">
    <property type="method" value="X-ray"/>
    <property type="resolution" value="2.40 A"/>
    <property type="chains" value="A=119-188"/>
</dbReference>
<dbReference type="PDB" id="7XWE">
    <property type="method" value="X-ray"/>
    <property type="resolution" value="1.60 A"/>
    <property type="chains" value="A/B=119-188"/>
</dbReference>
<dbReference type="PDB" id="7XWF">
    <property type="method" value="X-ray"/>
    <property type="resolution" value="1.45 A"/>
    <property type="chains" value="A=119-188"/>
</dbReference>
<dbReference type="PDB" id="7XWG">
    <property type="method" value="X-ray"/>
    <property type="resolution" value="1.83 A"/>
    <property type="chains" value="A/B=119-188"/>
</dbReference>
<dbReference type="PDB" id="7Y6W">
    <property type="method" value="X-ray"/>
    <property type="resolution" value="1.95 A"/>
    <property type="chains" value="A=119-188"/>
</dbReference>
<dbReference type="PDB" id="7Y6X">
    <property type="method" value="X-ray"/>
    <property type="resolution" value="2.20 A"/>
    <property type="chains" value="A/B/C/D/E/F/G/H=119-188"/>
</dbReference>
<dbReference type="PDB" id="7Y6Y">
    <property type="method" value="X-ray"/>
    <property type="resolution" value="1.54 A"/>
    <property type="chains" value="A/B/C/D=119-188"/>
</dbReference>
<dbReference type="PDB" id="7Y6Z">
    <property type="method" value="X-ray"/>
    <property type="resolution" value="1.60 A"/>
    <property type="chains" value="A=119-188"/>
</dbReference>
<dbReference type="PDB" id="7Y70">
    <property type="method" value="X-ray"/>
    <property type="resolution" value="1.80 A"/>
    <property type="chains" value="A=119-189"/>
</dbReference>
<dbReference type="PDBsum" id="6LHN"/>
<dbReference type="PDBsum" id="7XWD"/>
<dbReference type="PDBsum" id="7XWE"/>
<dbReference type="PDBsum" id="7XWF"/>
<dbReference type="PDBsum" id="7XWG"/>
<dbReference type="PDBsum" id="7Y6W"/>
<dbReference type="PDBsum" id="7Y6X"/>
<dbReference type="PDBsum" id="7Y6Y"/>
<dbReference type="PDBsum" id="7Y6Z"/>
<dbReference type="PDBsum" id="7Y70"/>
<dbReference type="SMR" id="F4KCC2"/>
<dbReference type="FunCoup" id="F4KCC2">
    <property type="interactions" value="3331"/>
</dbReference>
<dbReference type="STRING" id="3702.F4KCC2"/>
<dbReference type="iPTMnet" id="F4KCC2"/>
<dbReference type="PaxDb" id="3702-AT5G02310.1"/>
<dbReference type="ProteomicsDB" id="226480"/>
<dbReference type="EnsemblPlants" id="AT5G02310.1">
    <property type="protein sequence ID" value="AT5G02310.1"/>
    <property type="gene ID" value="AT5G02310"/>
</dbReference>
<dbReference type="EnsemblPlants" id="AT5G02310.3">
    <property type="protein sequence ID" value="AT5G02310.3"/>
    <property type="gene ID" value="AT5G02310"/>
</dbReference>
<dbReference type="GeneID" id="830916"/>
<dbReference type="Gramene" id="AT5G02310.1">
    <property type="protein sequence ID" value="AT5G02310.1"/>
    <property type="gene ID" value="AT5G02310"/>
</dbReference>
<dbReference type="Gramene" id="AT5G02310.3">
    <property type="protein sequence ID" value="AT5G02310.3"/>
    <property type="gene ID" value="AT5G02310"/>
</dbReference>
<dbReference type="KEGG" id="ath:AT5G02310"/>
<dbReference type="Araport" id="AT5G02310"/>
<dbReference type="TAIR" id="AT5G02310">
    <property type="gene designation" value="PRT6"/>
</dbReference>
<dbReference type="eggNOG" id="KOG1139">
    <property type="taxonomic scope" value="Eukaryota"/>
</dbReference>
<dbReference type="eggNOG" id="KOG1140">
    <property type="taxonomic scope" value="Eukaryota"/>
</dbReference>
<dbReference type="HOGENOM" id="CLU_001801_1_0_1"/>
<dbReference type="InParanoid" id="F4KCC2"/>
<dbReference type="UniPathway" id="UPA00143"/>
<dbReference type="PRO" id="PR:F4KCC2"/>
<dbReference type="Proteomes" id="UP000006548">
    <property type="component" value="Chromosome 5"/>
</dbReference>
<dbReference type="ExpressionAtlas" id="F4KCC2">
    <property type="expression patterns" value="baseline and differential"/>
</dbReference>
<dbReference type="GO" id="GO:0061630">
    <property type="term" value="F:ubiquitin protein ligase activity"/>
    <property type="evidence" value="ECO:0007669"/>
    <property type="project" value="InterPro"/>
</dbReference>
<dbReference type="GO" id="GO:0004842">
    <property type="term" value="F:ubiquitin-protein transferase activity"/>
    <property type="evidence" value="ECO:0000314"/>
    <property type="project" value="TAIR"/>
</dbReference>
<dbReference type="GO" id="GO:0008270">
    <property type="term" value="F:zinc ion binding"/>
    <property type="evidence" value="ECO:0007669"/>
    <property type="project" value="UniProtKB-KW"/>
</dbReference>
<dbReference type="GO" id="GO:0042742">
    <property type="term" value="P:defense response to bacterium"/>
    <property type="evidence" value="ECO:0000315"/>
    <property type="project" value="TAIR"/>
</dbReference>
<dbReference type="GO" id="GO:0050832">
    <property type="term" value="P:defense response to fungus"/>
    <property type="evidence" value="ECO:0000315"/>
    <property type="project" value="TAIR"/>
</dbReference>
<dbReference type="GO" id="GO:0016567">
    <property type="term" value="P:protein ubiquitination"/>
    <property type="evidence" value="ECO:0007669"/>
    <property type="project" value="UniProtKB-UniPathway"/>
</dbReference>
<dbReference type="GO" id="GO:0050994">
    <property type="term" value="P:regulation of lipid catabolic process"/>
    <property type="evidence" value="ECO:0000315"/>
    <property type="project" value="TAIR"/>
</dbReference>
<dbReference type="GO" id="GO:0010029">
    <property type="term" value="P:regulation of seed germination"/>
    <property type="evidence" value="ECO:0000315"/>
    <property type="project" value="TAIR"/>
</dbReference>
<dbReference type="GO" id="GO:0009737">
    <property type="term" value="P:response to abscisic acid"/>
    <property type="evidence" value="ECO:0000315"/>
    <property type="project" value="TAIR"/>
</dbReference>
<dbReference type="GO" id="GO:0006511">
    <property type="term" value="P:ubiquitin-dependent protein catabolic process"/>
    <property type="evidence" value="ECO:0000314"/>
    <property type="project" value="TAIR"/>
</dbReference>
<dbReference type="GO" id="GO:0071596">
    <property type="term" value="P:ubiquitin-dependent protein catabolic process via the N-end rule pathway"/>
    <property type="evidence" value="ECO:0007669"/>
    <property type="project" value="InterPro"/>
</dbReference>
<dbReference type="CDD" id="cd16482">
    <property type="entry name" value="RING-H2_UBR1-like"/>
    <property type="match status" value="1"/>
</dbReference>
<dbReference type="CDD" id="cd19673">
    <property type="entry name" value="UBR-box_UBR3"/>
    <property type="match status" value="1"/>
</dbReference>
<dbReference type="FunFam" id="1.10.10.2670:FF:000003">
    <property type="entry name" value="E3 ubiquitin-protein ligase PRT6"/>
    <property type="match status" value="1"/>
</dbReference>
<dbReference type="FunFam" id="2.10.110.30:FF:000002">
    <property type="entry name" value="Putative e3 ubiquitin-protein ligase ubr3"/>
    <property type="match status" value="1"/>
</dbReference>
<dbReference type="Gene3D" id="2.10.110.30">
    <property type="match status" value="1"/>
</dbReference>
<dbReference type="Gene3D" id="1.10.10.2670">
    <property type="entry name" value="E3 ubiquitin-protein ligase"/>
    <property type="match status" value="1"/>
</dbReference>
<dbReference type="Gene3D" id="3.30.40.10">
    <property type="entry name" value="Zinc/RING finger domain, C3HC4 (zinc finger)"/>
    <property type="match status" value="1"/>
</dbReference>
<dbReference type="InterPro" id="IPR042065">
    <property type="entry name" value="E3_ELL-like"/>
</dbReference>
<dbReference type="InterPro" id="IPR044046">
    <property type="entry name" value="E3_ligase_UBR-like_C"/>
</dbReference>
<dbReference type="InterPro" id="IPR039164">
    <property type="entry name" value="UBR1-like"/>
</dbReference>
<dbReference type="InterPro" id="IPR055194">
    <property type="entry name" value="UBR1-like_winged-helix"/>
</dbReference>
<dbReference type="InterPro" id="IPR036390">
    <property type="entry name" value="WH_DNA-bd_sf"/>
</dbReference>
<dbReference type="InterPro" id="IPR013083">
    <property type="entry name" value="Znf_RING/FYVE/PHD"/>
</dbReference>
<dbReference type="InterPro" id="IPR003126">
    <property type="entry name" value="Znf_UBR"/>
</dbReference>
<dbReference type="PANTHER" id="PTHR21497:SF53">
    <property type="entry name" value="E3 UBIQUITIN-PROTEIN LIGASE PRT6"/>
    <property type="match status" value="1"/>
</dbReference>
<dbReference type="PANTHER" id="PTHR21497">
    <property type="entry name" value="UBIQUITIN LIGASE E3 ALPHA-RELATED"/>
    <property type="match status" value="1"/>
</dbReference>
<dbReference type="Pfam" id="PF18995">
    <property type="entry name" value="PRT6_C"/>
    <property type="match status" value="1"/>
</dbReference>
<dbReference type="Pfam" id="PF22960">
    <property type="entry name" value="UBR1-like_wing"/>
    <property type="match status" value="1"/>
</dbReference>
<dbReference type="Pfam" id="PF02207">
    <property type="entry name" value="zf-UBR"/>
    <property type="match status" value="1"/>
</dbReference>
<dbReference type="SMART" id="SM00396">
    <property type="entry name" value="ZnF_UBR1"/>
    <property type="match status" value="1"/>
</dbReference>
<dbReference type="SUPFAM" id="SSF46785">
    <property type="entry name" value="Winged helix' DNA-binding domain"/>
    <property type="match status" value="1"/>
</dbReference>
<dbReference type="PROSITE" id="PS51157">
    <property type="entry name" value="ZF_UBR"/>
    <property type="match status" value="1"/>
</dbReference>
<sequence length="2006" mass="223964">METNSSLFGLVSPSSHDLVIERLASVGVPKKYRSKRGLVEFVRANPAKISELVSALLPTDDDVKLGLKEARERPRKSAVSPTMKKRFRESMNMLQWLMFQDEPDVSLRNLAKLNLDQRGVCGSVWGQNDIAYRCRTCENDPTCAICVPCFQNGDHNSHDYSIIYTGGGCCDCGDETAWKPDGFCSNHKGSEQIRPLSENLANSVGPILDALFTCWNNKLLSAESSGQKGARSNDTLVILQKMSNELTFIVVEMLLEFSMSSESLLSFVSRRIISSSGLLSILLKAERFLDQDVMKKLHDLFLKLIGDPVFKCEFAKAFVSYYPVVISEVVKQGTDNAFKKYPLLSTFSVQILTVPTLTPFLVKEMNLLAMLLGCLSDIFVSCSGEDGLLQATKLERLCETSERVIGDLKFVMSHAIVSKYATHEHRELSRSWLTLLTFAQGMNPLKRETGIPIDEENDYMHLFFVLGHSIAVIHSLLVNGTYSAASDEEIENDRNAKEEFDKCDGDGERYAKVGRLSHEDSVCTAIVSSSSFDSSMASEVHKIDPFHALLPSSAIYLIRECLKVLETCLGNDEGISKFLCKLSSSSGRNIPESKMSWPRRDLLNVETGGSVSSNLASSSRDPSTGLSPLCGDIQTNLSLDNVCGPYGVVQTDVTADSKRVSCNSADLTKNASGLRILGLCDWPDIHYDVSSQAISVHLPLHRLLSLLIQKALRICYGESASYNGVSISHEIPHADFFSSVIGDFHPCGFSALVMEHVLQIRVFCAQVIAGMWKKNGDSALVSCEWYRSVRWSEQGLELDLFLLQCCAALAPADSYVDKLLSRFGLSSYLSLNPDITNEYEPVLVQEMLGLLIQILQERRFCGLSTAESLRREIIFKLATGDFTHSQLVKSLPRDLSKSDELQEVLDDVSVYCNPSGMNQGKYSLQSSCWKELDLYHPRWQSRDLQSAEERFSRYCGVSALTTQLPRWRMIYPPLKGLARIGTCKATFQIISSALYYALQSGTSVKSRAPDGVLITALQLLSLSLDICTQQRQSNSQDCCLENSIPILELAGLEIIGIAQGTEKESLLSLLVSLMKTRMGDGRHQFPEPGSCNISSWIGNLLKKFSAIDSVCMNLLQSLAPEVVGQSGFDKVMSGSTSDEKRKAKAKERQAAIMAKMKAEQSKFLSTLSSSMDDDDPRSEFETSDSVMEHDSEIAVREVCSLCHDPDSKDPVSFLIFLQKSKLLSFVDRGPPSWDQCPQSEKKISVDGAPDLLRMNASSDSLRISSPLMLQLSDDTISESANMIESIKARLIGNGQTEKRSSDGRGKDESNMESLEIAMYQTVRNKIENMINQSLTRVDHQPHEAENCSEKNSVGGPSTLQGRFPDIRSRQTSRRPDAGSDGFHPIDCDGVYLSSCGHAVHQSCLERYLKSLKERSGRRTVFEGAHIVDLKKKEFLCPVCRRLANSVLPECPGDLCSVSKLQDSPRTKLRRKDALQPSLWLSEALCLLRSAAEVIEDGDRGKTVTPQGDGPRRKDLKSVSKMLWDFYFPKPEDKTLKRLWLPPQSIVMWDTLKYSLISMEIGTRFAKNSMLPVYCIDSLYEELKTSKGTILSVLLRVVQSSRTKNTIHVRQRFVGMKHLAESICYGVSSSSSSSIFGSEGTTGSLKNIDLLWNRASDPVLAHDPFSSLMWALFCLPFPFLTCEESLLSLVHIFHSVSLVQTVIAYCACRPSELSELNFGENLLNDISNALRESGGWEYFRSNNMDLSCDIKDTIRKYSLPFLRRCALLWKLLKSTPRKLHEESDMFDLPSDPTTDNMDFIYSPQSELNHVQELEKMFNIPPIDIILNDELLRSSTQIWLQHFQREYRVNRVKRSLCITPVVPFQLMKLPNLYQDLLQRCIKKRCVNCTKVIEEPVLCLLCGSLCSPIWSPCCRESGCPNHAITCGAGTGVFLLIRRTTILLQRFARQSPWPSPYLDTFGEEDIDMIRGKRLYLNEERYAALTYLVGSHGLDRSSKVLGQTTIGAVLH</sequence>
<name>PRT6_ARATH</name>
<gene>
    <name evidence="12" type="primary">PRT6</name>
    <name evidence="14" type="synonym">CER3</name>
    <name evidence="13" type="synonym">GED1</name>
    <name evidence="16" type="ordered locus">At5g02310/At5g02300</name>
    <name evidence="17 18" type="ORF">T1E22.70/T1E22.60</name>
</gene>
<accession>F4KCC2</accession>
<accession>Q96248</accession>
<accession>Q9LZ94</accession>
<accession>Q9LZ95</accession>
<protein>
    <recommendedName>
        <fullName evidence="15">E3 ubiquitin-protein ligase PRT6</fullName>
        <ecNumber>2.3.2.27</ecNumber>
    </recommendedName>
    <alternativeName>
        <fullName evidence="13">Protein GREENING AFTER EXTENDED DARKNESS 1</fullName>
    </alternativeName>
    <alternativeName>
        <fullName evidence="12">Protein PROTEOLYSIS 6</fullName>
    </alternativeName>
    <alternativeName>
        <fullName evidence="15">RING-type E3 ubiquitin transferase PRT6</fullName>
    </alternativeName>
</protein>